<dbReference type="EMBL" id="X84209">
    <property type="protein sequence ID" value="CAA58995.1"/>
    <property type="molecule type" value="mRNA"/>
</dbReference>
<dbReference type="EMBL" id="D78017">
    <property type="protein sequence ID" value="BAA11203.1"/>
    <property type="molecule type" value="mRNA"/>
</dbReference>
<dbReference type="EMBL" id="AB060652">
    <property type="protein sequence ID" value="BAB43904.1"/>
    <property type="molecule type" value="mRNA"/>
</dbReference>
<dbReference type="EMBL" id="X13167">
    <property type="protein sequence ID" value="CAA31565.1"/>
    <property type="molecule type" value="mRNA"/>
</dbReference>
<dbReference type="PIR" id="JC5428">
    <property type="entry name" value="JC5428"/>
</dbReference>
<dbReference type="RefSeq" id="NP_037120.1">
    <property type="nucleotide sequence ID" value="NM_012988.3"/>
</dbReference>
<dbReference type="SMR" id="P09414"/>
<dbReference type="FunCoup" id="P09414">
    <property type="interactions" value="1278"/>
</dbReference>
<dbReference type="STRING" id="10116.ENSRNOP00000073444"/>
<dbReference type="GlyGen" id="P09414">
    <property type="glycosylation" value="2 sites"/>
</dbReference>
<dbReference type="iPTMnet" id="P09414"/>
<dbReference type="PhosphoSitePlus" id="P09414"/>
<dbReference type="PaxDb" id="10116-ENSRNOP00000004017"/>
<dbReference type="PeptideAtlas" id="P09414"/>
<dbReference type="GeneID" id="25492"/>
<dbReference type="KEGG" id="rno:25492"/>
<dbReference type="UCSC" id="RGD:3170">
    <property type="organism name" value="rat"/>
</dbReference>
<dbReference type="AGR" id="RGD:3170"/>
<dbReference type="CTD" id="4774"/>
<dbReference type="RGD" id="3170">
    <property type="gene designation" value="Nfia"/>
</dbReference>
<dbReference type="eggNOG" id="KOG3663">
    <property type="taxonomic scope" value="Eukaryota"/>
</dbReference>
<dbReference type="InParanoid" id="P09414"/>
<dbReference type="OrthoDB" id="73294at9989"/>
<dbReference type="PhylomeDB" id="P09414"/>
<dbReference type="PRO" id="PR:P09414"/>
<dbReference type="Proteomes" id="UP000002494">
    <property type="component" value="Unplaced"/>
</dbReference>
<dbReference type="GO" id="GO:0005634">
    <property type="term" value="C:nucleus"/>
    <property type="evidence" value="ECO:0000266"/>
    <property type="project" value="RGD"/>
</dbReference>
<dbReference type="GO" id="GO:0003682">
    <property type="term" value="F:chromatin binding"/>
    <property type="evidence" value="ECO:0000266"/>
    <property type="project" value="RGD"/>
</dbReference>
<dbReference type="GO" id="GO:0003677">
    <property type="term" value="F:DNA binding"/>
    <property type="evidence" value="ECO:0000314"/>
    <property type="project" value="UniProtKB"/>
</dbReference>
<dbReference type="GO" id="GO:0001228">
    <property type="term" value="F:DNA-binding transcription activator activity, RNA polymerase II-specific"/>
    <property type="evidence" value="ECO:0000266"/>
    <property type="project" value="RGD"/>
</dbReference>
<dbReference type="GO" id="GO:0000981">
    <property type="term" value="F:DNA-binding transcription factor activity, RNA polymerase II-specific"/>
    <property type="evidence" value="ECO:0000318"/>
    <property type="project" value="GO_Central"/>
</dbReference>
<dbReference type="GO" id="GO:0140297">
    <property type="term" value="F:DNA-binding transcription factor binding"/>
    <property type="evidence" value="ECO:0000266"/>
    <property type="project" value="RGD"/>
</dbReference>
<dbReference type="GO" id="GO:0000978">
    <property type="term" value="F:RNA polymerase II cis-regulatory region sequence-specific DNA binding"/>
    <property type="evidence" value="ECO:0000266"/>
    <property type="project" value="RGD"/>
</dbReference>
<dbReference type="GO" id="GO:0030509">
    <property type="term" value="P:BMP signaling pathway"/>
    <property type="evidence" value="ECO:0000266"/>
    <property type="project" value="RGD"/>
</dbReference>
<dbReference type="GO" id="GO:0051216">
    <property type="term" value="P:cartilage development"/>
    <property type="evidence" value="ECO:0000266"/>
    <property type="project" value="RGD"/>
</dbReference>
<dbReference type="GO" id="GO:0000902">
    <property type="term" value="P:cell morphogenesis"/>
    <property type="evidence" value="ECO:0000266"/>
    <property type="project" value="RGD"/>
</dbReference>
<dbReference type="GO" id="GO:0006260">
    <property type="term" value="P:DNA replication"/>
    <property type="evidence" value="ECO:0007669"/>
    <property type="project" value="UniProtKB-KW"/>
</dbReference>
<dbReference type="GO" id="GO:0010458">
    <property type="term" value="P:exit from mitosis"/>
    <property type="evidence" value="ECO:0000266"/>
    <property type="project" value="RGD"/>
</dbReference>
<dbReference type="GO" id="GO:0010467">
    <property type="term" value="P:gene expression"/>
    <property type="evidence" value="ECO:0000266"/>
    <property type="project" value="RGD"/>
</dbReference>
<dbReference type="GO" id="GO:0048699">
    <property type="term" value="P:generation of neurons"/>
    <property type="evidence" value="ECO:0000266"/>
    <property type="project" value="RGD"/>
</dbReference>
<dbReference type="GO" id="GO:0021780">
    <property type="term" value="P:glial cell fate specification"/>
    <property type="evidence" value="ECO:0000266"/>
    <property type="project" value="RGD"/>
</dbReference>
<dbReference type="GO" id="GO:0014009">
    <property type="term" value="P:glial cell proliferation"/>
    <property type="evidence" value="ECO:0000266"/>
    <property type="project" value="RGD"/>
</dbReference>
<dbReference type="GO" id="GO:0035108">
    <property type="term" value="P:limb morphogenesis"/>
    <property type="evidence" value="ECO:0000266"/>
    <property type="project" value="RGD"/>
</dbReference>
<dbReference type="GO" id="GO:0061351">
    <property type="term" value="P:neural precursor cell proliferation"/>
    <property type="evidence" value="ECO:0000266"/>
    <property type="project" value="RGD"/>
</dbReference>
<dbReference type="GO" id="GO:0022008">
    <property type="term" value="P:neurogenesis"/>
    <property type="evidence" value="ECO:0000266"/>
    <property type="project" value="RGD"/>
</dbReference>
<dbReference type="GO" id="GO:0048665">
    <property type="term" value="P:neuron fate specification"/>
    <property type="evidence" value="ECO:0000266"/>
    <property type="project" value="RGD"/>
</dbReference>
<dbReference type="GO" id="GO:0045893">
    <property type="term" value="P:positive regulation of DNA-templated transcription"/>
    <property type="evidence" value="ECO:0000314"/>
    <property type="project" value="RGD"/>
</dbReference>
<dbReference type="GO" id="GO:0045944">
    <property type="term" value="P:positive regulation of transcription by RNA polymerase II"/>
    <property type="evidence" value="ECO:0000266"/>
    <property type="project" value="RGD"/>
</dbReference>
<dbReference type="GO" id="GO:0006357">
    <property type="term" value="P:regulation of transcription by RNA polymerase II"/>
    <property type="evidence" value="ECO:0000318"/>
    <property type="project" value="GO_Central"/>
</dbReference>
<dbReference type="GO" id="GO:1904010">
    <property type="term" value="P:response to Aroclor 1254"/>
    <property type="evidence" value="ECO:0000270"/>
    <property type="project" value="RGD"/>
</dbReference>
<dbReference type="GO" id="GO:0009611">
    <property type="term" value="P:response to wounding"/>
    <property type="evidence" value="ECO:0000266"/>
    <property type="project" value="RGD"/>
</dbReference>
<dbReference type="GO" id="GO:0060041">
    <property type="term" value="P:retina development in camera-type eye"/>
    <property type="evidence" value="ECO:0000266"/>
    <property type="project" value="RGD"/>
</dbReference>
<dbReference type="GO" id="GO:0060074">
    <property type="term" value="P:synapse maturation"/>
    <property type="evidence" value="ECO:0000266"/>
    <property type="project" value="RGD"/>
</dbReference>
<dbReference type="GO" id="GO:0072189">
    <property type="term" value="P:ureter development"/>
    <property type="evidence" value="ECO:0000266"/>
    <property type="project" value="RGD"/>
</dbReference>
<dbReference type="InterPro" id="IPR000647">
    <property type="entry name" value="CTF/NFI"/>
</dbReference>
<dbReference type="InterPro" id="IPR020604">
    <property type="entry name" value="CTF/NFI_DNA-bd-dom"/>
</dbReference>
<dbReference type="InterPro" id="IPR019739">
    <property type="entry name" value="CTF/NFI_DNA-bd_CS"/>
</dbReference>
<dbReference type="InterPro" id="IPR019548">
    <property type="entry name" value="CTF/NFI_DNA-bd_N"/>
</dbReference>
<dbReference type="InterPro" id="IPR003619">
    <property type="entry name" value="MAD_homology1_Dwarfin-type"/>
</dbReference>
<dbReference type="PANTHER" id="PTHR11492:SF6">
    <property type="entry name" value="NUCLEAR FACTOR 1 A-TYPE"/>
    <property type="match status" value="1"/>
</dbReference>
<dbReference type="PANTHER" id="PTHR11492">
    <property type="entry name" value="NUCLEAR FACTOR I"/>
    <property type="match status" value="1"/>
</dbReference>
<dbReference type="Pfam" id="PF00859">
    <property type="entry name" value="CTF_NFI"/>
    <property type="match status" value="1"/>
</dbReference>
<dbReference type="Pfam" id="PF03165">
    <property type="entry name" value="MH1"/>
    <property type="match status" value="1"/>
</dbReference>
<dbReference type="Pfam" id="PF10524">
    <property type="entry name" value="NfI_DNAbd_pre-N"/>
    <property type="match status" value="1"/>
</dbReference>
<dbReference type="SMART" id="SM00523">
    <property type="entry name" value="DWA"/>
    <property type="match status" value="1"/>
</dbReference>
<dbReference type="PROSITE" id="PS00349">
    <property type="entry name" value="CTF_NFI_1"/>
    <property type="match status" value="1"/>
</dbReference>
<dbReference type="PROSITE" id="PS51080">
    <property type="entry name" value="CTF_NFI_2"/>
    <property type="match status" value="1"/>
</dbReference>
<gene>
    <name type="primary">Nfia</name>
    <name type="synonym">Nf1l21</name>
</gene>
<sequence>MYSPLCLTQDEFHPFIEALLPHVRAFAYTWFNLQARKRKYFKKHEKRMSKEEERAVKDELLSEKPEVKQKWASRLLAKLRKDIRPEYREDFVLTVTGKKPPCCVLSNPDQKGKMRRIDCLRQADKVWRLDLVMVILFKGIPLESTDGERLVKSPQCSNPGLCVQPHHIGVSVKELDLYLAYFVHAADSSQSESPSQPSDADIKDQPENGHLGFQDSFVTSGVFSVTELVRVSQTPIAAGTGPNFSLSDLESSSYYSMSPGAMRRSLPSTSSTSSTKRLKSVEDEMDSPGEEPFYTGQGRSPGSGSQSSGWHEVEPGMPSPTTLKKSEKSGFSSPSPSQTSSLGTAFTQHHRPVITGPRASPHATPSTLHFPTSPIIQQPGPYFSHPAIRYHPQETLKEFVQLVCPDAGQQAGQVGFLNPNGSSQGKVHNPFLPTPMLPPPPPPPMARPVPLPMPDTKPPTTSTEGGAASPTSPTYSTPSTSPANRFVSVGPRDPSFVNIPQQTQSWYLG</sequence>
<organism>
    <name type="scientific">Rattus norvegicus</name>
    <name type="common">Rat</name>
    <dbReference type="NCBI Taxonomy" id="10116"/>
    <lineage>
        <taxon>Eukaryota</taxon>
        <taxon>Metazoa</taxon>
        <taxon>Chordata</taxon>
        <taxon>Craniata</taxon>
        <taxon>Vertebrata</taxon>
        <taxon>Euteleostomi</taxon>
        <taxon>Mammalia</taxon>
        <taxon>Eutheria</taxon>
        <taxon>Euarchontoglires</taxon>
        <taxon>Glires</taxon>
        <taxon>Rodentia</taxon>
        <taxon>Myomorpha</taxon>
        <taxon>Muroidea</taxon>
        <taxon>Muridae</taxon>
        <taxon>Murinae</taxon>
        <taxon>Rattus</taxon>
    </lineage>
</organism>
<protein>
    <recommendedName>
        <fullName>Nuclear factor 1 A-type</fullName>
        <shortName>NF1-A</shortName>
        <shortName>Nuclear factor 1/A</shortName>
    </recommendedName>
    <alternativeName>
        <fullName>CCAAT-box-binding transcription factor</fullName>
        <shortName>CTF</shortName>
    </alternativeName>
    <alternativeName>
        <fullName>Nuclear factor I/A</fullName>
        <shortName>NF-I/A</shortName>
        <shortName>NFI-A</shortName>
    </alternativeName>
    <alternativeName>
        <fullName>TGGCA-binding protein</fullName>
    </alternativeName>
</protein>
<accession>P09414</accession>
<accession>Q54A99</accession>
<accession>Q63782</accession>
<comment type="function">
    <text>Recognizes and binds the palindromic sequence 5'-TTGGCNNNNNGCCAA-3' present in viral and cellular promoters and in the origin of replication of adenovirus type 2. These proteins are individually capable of activating transcription and replication.</text>
</comment>
<comment type="subunit">
    <text>Binds DNA as a homodimer.</text>
</comment>
<comment type="subcellular location">
    <subcellularLocation>
        <location>Nucleus</location>
    </subcellularLocation>
</comment>
<comment type="domain">
    <text evidence="2">The 9aaTAD motif is a transactivation domain present in a large number of yeast and animal transcription factors.</text>
</comment>
<comment type="similarity">
    <text evidence="3">Belongs to the CTF/NF-I family.</text>
</comment>
<keyword id="KW-0010">Activator</keyword>
<keyword id="KW-0903">Direct protein sequencing</keyword>
<keyword id="KW-0235">DNA replication</keyword>
<keyword id="KW-0238">DNA-binding</keyword>
<keyword id="KW-0488">Methylation</keyword>
<keyword id="KW-0539">Nucleus</keyword>
<keyword id="KW-0597">Phosphoprotein</keyword>
<keyword id="KW-1185">Reference proteome</keyword>
<keyword id="KW-0804">Transcription</keyword>
<keyword id="KW-0805">Transcription regulation</keyword>
<reference key="1">
    <citation type="journal article" date="1995" name="Mol. Biol. Rep.">
        <title>A complex interplay of positive and negative elements is responsible for the different transcriptional activity of liver NF1 variants.</title>
        <authorList>
            <person name="Monaci P."/>
            <person name="Nuzzo M."/>
            <person name="Stampfli S."/>
            <person name="Tollervey D."/>
            <person name="de Simone V."/>
            <person name="Nicosia A."/>
        </authorList>
    </citation>
    <scope>NUCLEOTIDE SEQUENCE [MRNA]</scope>
    <source>
        <strain>Sprague-Dawley</strain>
        <tissue>Liver</tissue>
    </source>
</reference>
<reference key="2">
    <citation type="journal article" date="1997" name="J. Biochem.">
        <title>Nuclear factor 1 family proteins bind to the silencer element in the rat glutathione transferase P gene.</title>
        <authorList>
            <person name="Osada S."/>
            <person name="Daimon S."/>
            <person name="Ikeda T."/>
            <person name="Nishihara T."/>
            <person name="Yano K."/>
            <person name="Yamasaki M."/>
            <person name="Imagawa M."/>
        </authorList>
    </citation>
    <scope>NUCLEOTIDE SEQUENCE [MRNA]</scope>
    <source>
        <strain>Sprague-Dawley</strain>
        <tissue>Liver</tissue>
    </source>
</reference>
<reference key="3">
    <citation type="journal article" date="2002" name="J. Cell. Biochem.">
        <title>Identification of transcription factor in the promoter region of rat regucalcin gene: binding of nuclear factor I-A1 to TTGGC motif.</title>
        <authorList>
            <person name="Misawa H."/>
            <person name="Yamaguchi M."/>
        </authorList>
    </citation>
    <scope>NUCLEOTIDE SEQUENCE [MRNA]</scope>
</reference>
<reference key="4">
    <citation type="journal article" date="1988" name="EMBO J.">
        <title>Purification of a NF1-like DNA-binding protein from rat liver and cloning of the corresponding cDNA.</title>
        <authorList>
            <person name="Paonessa G."/>
            <person name="Gounari F."/>
            <person name="Frank R."/>
            <person name="Cortese R."/>
        </authorList>
    </citation>
    <scope>NUCLEOTIDE SEQUENCE [MRNA] OF 5-509</scope>
    <scope>PARTIAL PROTEIN SEQUENCE</scope>
    <source>
        <tissue>Liver</tissue>
    </source>
</reference>
<reference key="5">
    <citation type="journal article" date="2012" name="Nat. Commun.">
        <title>Quantitative maps of protein phosphorylation sites across 14 different rat organs and tissues.</title>
        <authorList>
            <person name="Lundby A."/>
            <person name="Secher A."/>
            <person name="Lage K."/>
            <person name="Nordsborg N.B."/>
            <person name="Dmytriyev A."/>
            <person name="Lundby C."/>
            <person name="Olsen J.V."/>
        </authorList>
    </citation>
    <scope>PHOSPHORYLATION [LARGE SCALE ANALYSIS] AT SER-258; SER-280; SER-287; SER-300; SER-305 AND SER-319</scope>
    <scope>IDENTIFICATION BY MASS SPECTROMETRY [LARGE SCALE ANALYSIS]</scope>
</reference>
<name>NFIA_RAT</name>
<proteinExistence type="evidence at protein level"/>
<feature type="chain" id="PRO_0000100193" description="Nuclear factor 1 A-type">
    <location>
        <begin position="1"/>
        <end position="509"/>
    </location>
</feature>
<feature type="DNA-binding region" description="CTF/NF-I" evidence="3">
    <location>
        <begin position="1"/>
        <end position="194"/>
    </location>
</feature>
<feature type="region of interest" description="Disordered" evidence="4">
    <location>
        <begin position="189"/>
        <end position="211"/>
    </location>
</feature>
<feature type="region of interest" description="Disordered" evidence="4">
    <location>
        <begin position="259"/>
        <end position="345"/>
    </location>
</feature>
<feature type="region of interest" description="Disordered" evidence="4">
    <location>
        <begin position="352"/>
        <end position="371"/>
    </location>
</feature>
<feature type="region of interest" description="Disordered" evidence="4">
    <location>
        <begin position="437"/>
        <end position="509"/>
    </location>
</feature>
<feature type="short sequence motif" description="9aaTAD" evidence="2">
    <location>
        <begin position="394"/>
        <end position="402"/>
    </location>
</feature>
<feature type="compositionally biased region" description="Low complexity" evidence="4">
    <location>
        <begin position="189"/>
        <end position="199"/>
    </location>
</feature>
<feature type="compositionally biased region" description="Low complexity" evidence="4">
    <location>
        <begin position="259"/>
        <end position="275"/>
    </location>
</feature>
<feature type="compositionally biased region" description="Low complexity" evidence="4">
    <location>
        <begin position="296"/>
        <end position="309"/>
    </location>
</feature>
<feature type="compositionally biased region" description="Low complexity" evidence="4">
    <location>
        <begin position="329"/>
        <end position="341"/>
    </location>
</feature>
<feature type="compositionally biased region" description="Pro residues" evidence="4">
    <location>
        <begin position="437"/>
        <end position="457"/>
    </location>
</feature>
<feature type="compositionally biased region" description="Low complexity" evidence="4">
    <location>
        <begin position="469"/>
        <end position="482"/>
    </location>
</feature>
<feature type="compositionally biased region" description="Polar residues" evidence="4">
    <location>
        <begin position="498"/>
        <end position="509"/>
    </location>
</feature>
<feature type="modified residue" description="Phosphoserine" evidence="5">
    <location>
        <position position="258"/>
    </location>
</feature>
<feature type="modified residue" description="Phosphoserine" evidence="2">
    <location>
        <position position="265"/>
    </location>
</feature>
<feature type="modified residue" description="Phosphoserine" evidence="5">
    <location>
        <position position="280"/>
    </location>
</feature>
<feature type="modified residue" description="Phosphoserine" evidence="5">
    <location>
        <position position="287"/>
    </location>
</feature>
<feature type="modified residue" description="Phosphoserine" evidence="5">
    <location>
        <position position="300"/>
    </location>
</feature>
<feature type="modified residue" description="Phosphoserine" evidence="5">
    <location>
        <position position="305"/>
    </location>
</feature>
<feature type="modified residue" description="Phosphoserine" evidence="5">
    <location>
        <position position="319"/>
    </location>
</feature>
<feature type="modified residue" description="Phosphoserine" evidence="2">
    <location>
        <position position="360"/>
    </location>
</feature>
<feature type="modified residue" description="Asymmetric dimethylarginine" evidence="1">
    <location>
        <position position="389"/>
    </location>
</feature>
<feature type="modified residue" description="Phosphoserine" evidence="2">
    <location>
        <position position="469"/>
    </location>
</feature>
<feature type="modified residue" description="Phosphothreonine" evidence="2">
    <location>
        <position position="471"/>
    </location>
</feature>
<evidence type="ECO:0000250" key="1">
    <source>
        <dbReference type="UniProtKB" id="Q02780"/>
    </source>
</evidence>
<evidence type="ECO:0000250" key="2">
    <source>
        <dbReference type="UniProtKB" id="Q12857"/>
    </source>
</evidence>
<evidence type="ECO:0000255" key="3">
    <source>
        <dbReference type="PROSITE-ProRule" id="PRU00436"/>
    </source>
</evidence>
<evidence type="ECO:0000256" key="4">
    <source>
        <dbReference type="SAM" id="MobiDB-lite"/>
    </source>
</evidence>
<evidence type="ECO:0007744" key="5">
    <source>
    </source>
</evidence>